<sequence length="239" mass="26614">MGQKVNPTGLRLGINKTWSSRWYAGPRNYADLLLEDLKIRAMIQEIPECKNADIAEVEIIRHPQRITIMIHTARPGVIIGVKGANIENIGAIIQKKLGKKVQIKIKEVKRAELRAALVAQNVARQLAGRASFRKVLKQACFNTMRSGAQGIKIRISGRLGGAEMSRTEEMKEGRVPLHTLRADIDYGFAEADTTYGKIGVKVWLYSGMMFGGEQKEDAGALLKKQRRPRTEKPAQAGRQ</sequence>
<gene>
    <name evidence="1" type="primary">rpsC</name>
    <name type="ordered locus">TDE_0773</name>
</gene>
<organism>
    <name type="scientific">Treponema denticola (strain ATCC 35405 / DSM 14222 / CIP 103919 / JCM 8153 / KCTC 15104)</name>
    <dbReference type="NCBI Taxonomy" id="243275"/>
    <lineage>
        <taxon>Bacteria</taxon>
        <taxon>Pseudomonadati</taxon>
        <taxon>Spirochaetota</taxon>
        <taxon>Spirochaetia</taxon>
        <taxon>Spirochaetales</taxon>
        <taxon>Treponemataceae</taxon>
        <taxon>Treponema</taxon>
    </lineage>
</organism>
<evidence type="ECO:0000255" key="1">
    <source>
        <dbReference type="HAMAP-Rule" id="MF_01309"/>
    </source>
</evidence>
<evidence type="ECO:0000256" key="2">
    <source>
        <dbReference type="SAM" id="MobiDB-lite"/>
    </source>
</evidence>
<evidence type="ECO:0000305" key="3"/>
<accession>Q73PM6</accession>
<proteinExistence type="inferred from homology"/>
<comment type="function">
    <text evidence="1">Binds the lower part of the 30S subunit head. Binds mRNA in the 70S ribosome, positioning it for translation.</text>
</comment>
<comment type="subunit">
    <text evidence="1">Part of the 30S ribosomal subunit. Forms a tight complex with proteins S10 and S14.</text>
</comment>
<comment type="similarity">
    <text evidence="1">Belongs to the universal ribosomal protein uS3 family.</text>
</comment>
<keyword id="KW-1185">Reference proteome</keyword>
<keyword id="KW-0687">Ribonucleoprotein</keyword>
<keyword id="KW-0689">Ribosomal protein</keyword>
<keyword id="KW-0694">RNA-binding</keyword>
<keyword id="KW-0699">rRNA-binding</keyword>
<reference key="1">
    <citation type="journal article" date="2004" name="Proc. Natl. Acad. Sci. U.S.A.">
        <title>Comparison of the genome of the oral pathogen Treponema denticola with other spirochete genomes.</title>
        <authorList>
            <person name="Seshadri R."/>
            <person name="Myers G.S.A."/>
            <person name="Tettelin H."/>
            <person name="Eisen J.A."/>
            <person name="Heidelberg J.F."/>
            <person name="Dodson R.J."/>
            <person name="Davidsen T.M."/>
            <person name="DeBoy R.T."/>
            <person name="Fouts D.E."/>
            <person name="Haft D.H."/>
            <person name="Selengut J."/>
            <person name="Ren Q."/>
            <person name="Brinkac L.M."/>
            <person name="Madupu R."/>
            <person name="Kolonay J.F."/>
            <person name="Durkin S.A."/>
            <person name="Daugherty S.C."/>
            <person name="Shetty J."/>
            <person name="Shvartsbeyn A."/>
            <person name="Gebregeorgis E."/>
            <person name="Geer K."/>
            <person name="Tsegaye G."/>
            <person name="Malek J.A."/>
            <person name="Ayodeji B."/>
            <person name="Shatsman S."/>
            <person name="McLeod M.P."/>
            <person name="Smajs D."/>
            <person name="Howell J.K."/>
            <person name="Pal S."/>
            <person name="Amin A."/>
            <person name="Vashisth P."/>
            <person name="McNeill T.Z."/>
            <person name="Xiang Q."/>
            <person name="Sodergren E."/>
            <person name="Baca E."/>
            <person name="Weinstock G.M."/>
            <person name="Norris S.J."/>
            <person name="Fraser C.M."/>
            <person name="Paulsen I.T."/>
        </authorList>
    </citation>
    <scope>NUCLEOTIDE SEQUENCE [LARGE SCALE GENOMIC DNA]</scope>
    <source>
        <strain>ATCC 35405 / DSM 14222 / CIP 103919 / JCM 8153 / KCTC 15104</strain>
    </source>
</reference>
<protein>
    <recommendedName>
        <fullName evidence="1">Small ribosomal subunit protein uS3</fullName>
    </recommendedName>
    <alternativeName>
        <fullName evidence="3">30S ribosomal protein S3</fullName>
    </alternativeName>
</protein>
<name>RS3_TREDE</name>
<dbReference type="EMBL" id="AE017226">
    <property type="protein sequence ID" value="AAS11264.1"/>
    <property type="molecule type" value="Genomic_DNA"/>
</dbReference>
<dbReference type="RefSeq" id="NP_971383.1">
    <property type="nucleotide sequence ID" value="NC_002967.9"/>
</dbReference>
<dbReference type="RefSeq" id="WP_002670002.1">
    <property type="nucleotide sequence ID" value="NC_002967.9"/>
</dbReference>
<dbReference type="SMR" id="Q73PM6"/>
<dbReference type="STRING" id="243275.TDE_0773"/>
<dbReference type="PaxDb" id="243275-TDE_0773"/>
<dbReference type="GeneID" id="2740313"/>
<dbReference type="KEGG" id="tde:TDE_0773"/>
<dbReference type="PATRIC" id="fig|243275.7.peg.746"/>
<dbReference type="eggNOG" id="COG0092">
    <property type="taxonomic scope" value="Bacteria"/>
</dbReference>
<dbReference type="HOGENOM" id="CLU_058591_0_2_12"/>
<dbReference type="OrthoDB" id="9806396at2"/>
<dbReference type="Proteomes" id="UP000008212">
    <property type="component" value="Chromosome"/>
</dbReference>
<dbReference type="GO" id="GO:0022627">
    <property type="term" value="C:cytosolic small ribosomal subunit"/>
    <property type="evidence" value="ECO:0007669"/>
    <property type="project" value="TreeGrafter"/>
</dbReference>
<dbReference type="GO" id="GO:0003729">
    <property type="term" value="F:mRNA binding"/>
    <property type="evidence" value="ECO:0007669"/>
    <property type="project" value="UniProtKB-UniRule"/>
</dbReference>
<dbReference type="GO" id="GO:0019843">
    <property type="term" value="F:rRNA binding"/>
    <property type="evidence" value="ECO:0007669"/>
    <property type="project" value="UniProtKB-UniRule"/>
</dbReference>
<dbReference type="GO" id="GO:0003735">
    <property type="term" value="F:structural constituent of ribosome"/>
    <property type="evidence" value="ECO:0007669"/>
    <property type="project" value="InterPro"/>
</dbReference>
<dbReference type="GO" id="GO:0006412">
    <property type="term" value="P:translation"/>
    <property type="evidence" value="ECO:0007669"/>
    <property type="project" value="UniProtKB-UniRule"/>
</dbReference>
<dbReference type="CDD" id="cd02412">
    <property type="entry name" value="KH-II_30S_S3"/>
    <property type="match status" value="1"/>
</dbReference>
<dbReference type="FunFam" id="3.30.300.20:FF:000001">
    <property type="entry name" value="30S ribosomal protein S3"/>
    <property type="match status" value="1"/>
</dbReference>
<dbReference type="Gene3D" id="3.30.300.20">
    <property type="match status" value="1"/>
</dbReference>
<dbReference type="Gene3D" id="3.30.1140.32">
    <property type="entry name" value="Ribosomal protein S3, C-terminal domain"/>
    <property type="match status" value="1"/>
</dbReference>
<dbReference type="HAMAP" id="MF_01309_B">
    <property type="entry name" value="Ribosomal_uS3_B"/>
    <property type="match status" value="1"/>
</dbReference>
<dbReference type="InterPro" id="IPR004087">
    <property type="entry name" value="KH_dom"/>
</dbReference>
<dbReference type="InterPro" id="IPR015946">
    <property type="entry name" value="KH_dom-like_a/b"/>
</dbReference>
<dbReference type="InterPro" id="IPR004044">
    <property type="entry name" value="KH_dom_type_2"/>
</dbReference>
<dbReference type="InterPro" id="IPR009019">
    <property type="entry name" value="KH_sf_prok-type"/>
</dbReference>
<dbReference type="InterPro" id="IPR036419">
    <property type="entry name" value="Ribosomal_S3_C_sf"/>
</dbReference>
<dbReference type="InterPro" id="IPR005704">
    <property type="entry name" value="Ribosomal_uS3_bac-typ"/>
</dbReference>
<dbReference type="InterPro" id="IPR001351">
    <property type="entry name" value="Ribosomal_uS3_C"/>
</dbReference>
<dbReference type="InterPro" id="IPR018280">
    <property type="entry name" value="Ribosomal_uS3_CS"/>
</dbReference>
<dbReference type="NCBIfam" id="TIGR01009">
    <property type="entry name" value="rpsC_bact"/>
    <property type="match status" value="1"/>
</dbReference>
<dbReference type="PANTHER" id="PTHR11760">
    <property type="entry name" value="30S/40S RIBOSOMAL PROTEIN S3"/>
    <property type="match status" value="1"/>
</dbReference>
<dbReference type="PANTHER" id="PTHR11760:SF19">
    <property type="entry name" value="SMALL RIBOSOMAL SUBUNIT PROTEIN US3C"/>
    <property type="match status" value="1"/>
</dbReference>
<dbReference type="Pfam" id="PF07650">
    <property type="entry name" value="KH_2"/>
    <property type="match status" value="1"/>
</dbReference>
<dbReference type="Pfam" id="PF00189">
    <property type="entry name" value="Ribosomal_S3_C"/>
    <property type="match status" value="1"/>
</dbReference>
<dbReference type="SMART" id="SM00322">
    <property type="entry name" value="KH"/>
    <property type="match status" value="1"/>
</dbReference>
<dbReference type="SUPFAM" id="SSF54814">
    <property type="entry name" value="Prokaryotic type KH domain (KH-domain type II)"/>
    <property type="match status" value="1"/>
</dbReference>
<dbReference type="SUPFAM" id="SSF54821">
    <property type="entry name" value="Ribosomal protein S3 C-terminal domain"/>
    <property type="match status" value="1"/>
</dbReference>
<dbReference type="PROSITE" id="PS50823">
    <property type="entry name" value="KH_TYPE_2"/>
    <property type="match status" value="1"/>
</dbReference>
<dbReference type="PROSITE" id="PS00548">
    <property type="entry name" value="RIBOSOMAL_S3"/>
    <property type="match status" value="1"/>
</dbReference>
<feature type="chain" id="PRO_0000130225" description="Small ribosomal subunit protein uS3">
    <location>
        <begin position="1"/>
        <end position="239"/>
    </location>
</feature>
<feature type="domain" description="KH type-2" evidence="1">
    <location>
        <begin position="39"/>
        <end position="109"/>
    </location>
</feature>
<feature type="region of interest" description="Disordered" evidence="2">
    <location>
        <begin position="219"/>
        <end position="239"/>
    </location>
</feature>